<accession>B2G4Y8</accession>
<feature type="chain" id="PRO_1000121128" description="DNA replication and repair protein RecF">
    <location>
        <begin position="1"/>
        <end position="374"/>
    </location>
</feature>
<feature type="binding site" evidence="1">
    <location>
        <begin position="30"/>
        <end position="37"/>
    </location>
    <ligand>
        <name>ATP</name>
        <dbReference type="ChEBI" id="CHEBI:30616"/>
    </ligand>
</feature>
<keyword id="KW-0067">ATP-binding</keyword>
<keyword id="KW-0963">Cytoplasm</keyword>
<keyword id="KW-0227">DNA damage</keyword>
<keyword id="KW-0234">DNA repair</keyword>
<keyword id="KW-0235">DNA replication</keyword>
<keyword id="KW-0238">DNA-binding</keyword>
<keyword id="KW-0547">Nucleotide-binding</keyword>
<keyword id="KW-0742">SOS response</keyword>
<gene>
    <name evidence="1" type="primary">recF</name>
    <name type="ordered locus">LAR_0004</name>
</gene>
<protein>
    <recommendedName>
        <fullName evidence="1">DNA replication and repair protein RecF</fullName>
    </recommendedName>
</protein>
<dbReference type="EMBL" id="AP007281">
    <property type="protein sequence ID" value="BAG24520.1"/>
    <property type="molecule type" value="Genomic_DNA"/>
</dbReference>
<dbReference type="RefSeq" id="WP_003669488.1">
    <property type="nucleotide sequence ID" value="NC_010609.1"/>
</dbReference>
<dbReference type="SMR" id="B2G4Y8"/>
<dbReference type="KEGG" id="lrf:LAR_0004"/>
<dbReference type="HOGENOM" id="CLU_040267_0_1_9"/>
<dbReference type="GO" id="GO:0005737">
    <property type="term" value="C:cytoplasm"/>
    <property type="evidence" value="ECO:0007669"/>
    <property type="project" value="UniProtKB-SubCell"/>
</dbReference>
<dbReference type="GO" id="GO:0005524">
    <property type="term" value="F:ATP binding"/>
    <property type="evidence" value="ECO:0007669"/>
    <property type="project" value="UniProtKB-UniRule"/>
</dbReference>
<dbReference type="GO" id="GO:0003697">
    <property type="term" value="F:single-stranded DNA binding"/>
    <property type="evidence" value="ECO:0007669"/>
    <property type="project" value="UniProtKB-UniRule"/>
</dbReference>
<dbReference type="GO" id="GO:0006260">
    <property type="term" value="P:DNA replication"/>
    <property type="evidence" value="ECO:0007669"/>
    <property type="project" value="UniProtKB-UniRule"/>
</dbReference>
<dbReference type="GO" id="GO:0000731">
    <property type="term" value="P:DNA synthesis involved in DNA repair"/>
    <property type="evidence" value="ECO:0007669"/>
    <property type="project" value="TreeGrafter"/>
</dbReference>
<dbReference type="GO" id="GO:0006302">
    <property type="term" value="P:double-strand break repair"/>
    <property type="evidence" value="ECO:0007669"/>
    <property type="project" value="TreeGrafter"/>
</dbReference>
<dbReference type="GO" id="GO:0009432">
    <property type="term" value="P:SOS response"/>
    <property type="evidence" value="ECO:0007669"/>
    <property type="project" value="UniProtKB-UniRule"/>
</dbReference>
<dbReference type="CDD" id="cd03242">
    <property type="entry name" value="ABC_RecF"/>
    <property type="match status" value="1"/>
</dbReference>
<dbReference type="Gene3D" id="3.40.50.300">
    <property type="entry name" value="P-loop containing nucleotide triphosphate hydrolases"/>
    <property type="match status" value="1"/>
</dbReference>
<dbReference type="Gene3D" id="1.20.1050.90">
    <property type="entry name" value="RecF/RecN/SMC, N-terminal domain"/>
    <property type="match status" value="1"/>
</dbReference>
<dbReference type="HAMAP" id="MF_00365">
    <property type="entry name" value="RecF"/>
    <property type="match status" value="1"/>
</dbReference>
<dbReference type="InterPro" id="IPR001238">
    <property type="entry name" value="DNA-binding_RecF"/>
</dbReference>
<dbReference type="InterPro" id="IPR018078">
    <property type="entry name" value="DNA-binding_RecF_CS"/>
</dbReference>
<dbReference type="InterPro" id="IPR027417">
    <property type="entry name" value="P-loop_NTPase"/>
</dbReference>
<dbReference type="InterPro" id="IPR003395">
    <property type="entry name" value="RecF/RecN/SMC_N"/>
</dbReference>
<dbReference type="InterPro" id="IPR042174">
    <property type="entry name" value="RecF_2"/>
</dbReference>
<dbReference type="NCBIfam" id="TIGR00611">
    <property type="entry name" value="recf"/>
    <property type="match status" value="1"/>
</dbReference>
<dbReference type="PANTHER" id="PTHR32182">
    <property type="entry name" value="DNA REPLICATION AND REPAIR PROTEIN RECF"/>
    <property type="match status" value="1"/>
</dbReference>
<dbReference type="PANTHER" id="PTHR32182:SF0">
    <property type="entry name" value="DNA REPLICATION AND REPAIR PROTEIN RECF"/>
    <property type="match status" value="1"/>
</dbReference>
<dbReference type="Pfam" id="PF02463">
    <property type="entry name" value="SMC_N"/>
    <property type="match status" value="1"/>
</dbReference>
<dbReference type="SUPFAM" id="SSF52540">
    <property type="entry name" value="P-loop containing nucleoside triphosphate hydrolases"/>
    <property type="match status" value="1"/>
</dbReference>
<dbReference type="PROSITE" id="PS00617">
    <property type="entry name" value="RECF_1"/>
    <property type="match status" value="1"/>
</dbReference>
<dbReference type="PROSITE" id="PS00618">
    <property type="entry name" value="RECF_2"/>
    <property type="match status" value="1"/>
</dbReference>
<reference key="1">
    <citation type="journal article" date="2008" name="DNA Res.">
        <title>Comparative genome analysis of Lactobacillus reuteri and Lactobacillus fermentum reveal a genomic island for reuterin and cobalamin production.</title>
        <authorList>
            <person name="Morita H."/>
            <person name="Toh H."/>
            <person name="Fukuda S."/>
            <person name="Horikawa H."/>
            <person name="Oshima K."/>
            <person name="Suzuki T."/>
            <person name="Murakami M."/>
            <person name="Hisamatsu S."/>
            <person name="Kato Y."/>
            <person name="Takizawa T."/>
            <person name="Fukuoka H."/>
            <person name="Yoshimura T."/>
            <person name="Itoh K."/>
            <person name="O'Sullivan D.J."/>
            <person name="McKay L.L."/>
            <person name="Ohno H."/>
            <person name="Kikuchi J."/>
            <person name="Masaoka T."/>
            <person name="Hattori M."/>
        </authorList>
    </citation>
    <scope>NUCLEOTIDE SEQUENCE [LARGE SCALE GENOMIC DNA]</scope>
    <source>
        <strain>JCM 1112</strain>
    </source>
</reference>
<comment type="function">
    <text evidence="1">The RecF protein is involved in DNA metabolism; it is required for DNA replication and normal SOS inducibility. RecF binds preferentially to single-stranded, linear DNA. It also seems to bind ATP.</text>
</comment>
<comment type="subcellular location">
    <subcellularLocation>
        <location evidence="1">Cytoplasm</location>
    </subcellularLocation>
</comment>
<comment type="similarity">
    <text evidence="1">Belongs to the RecF family.</text>
</comment>
<sequence>MILTELHLHHFRNYQDLTVHFNPGVNVLIGHNAQGKTNMLEAIYVLSLTKSHRTSNDHELINWQEKSALISGTVEKSIGKIPLELQFSSKGKKAKVNHLEQARLSQYVGQLNAILFAPEDLSLVKGSPALRRHFMDREFSQMSSKYLYNAGQYRTLLRQKNKYLKQLKYRQQTDRVLLGVLSDQLAAFGAEVIIARQHFLKHLEGWAADLHQEISLNKESLRLEYVNQLKVSDDTTVEEAYQALFKLYQDNEQREIEQGTTIYGPHRDDIRFLVNDKNVQAFGSQGQQRTTALSVKLAEIDLMKEQTGEYPLLLLDDVLSELDTIRQTHLLTAIQNKVQTFLTTTSLSDVARQLINEPTIFEIEHGTLNKEEVK</sequence>
<name>RECF_LIMRJ</name>
<evidence type="ECO:0000255" key="1">
    <source>
        <dbReference type="HAMAP-Rule" id="MF_00365"/>
    </source>
</evidence>
<organism>
    <name type="scientific">Limosilactobacillus reuteri subsp. reuteri (strain JCM 1112)</name>
    <name type="common">Lactobacillus reuteri</name>
    <dbReference type="NCBI Taxonomy" id="557433"/>
    <lineage>
        <taxon>Bacteria</taxon>
        <taxon>Bacillati</taxon>
        <taxon>Bacillota</taxon>
        <taxon>Bacilli</taxon>
        <taxon>Lactobacillales</taxon>
        <taxon>Lactobacillaceae</taxon>
        <taxon>Limosilactobacillus</taxon>
    </lineage>
</organism>
<proteinExistence type="inferred from homology"/>